<keyword id="KW-0414">Isoprene biosynthesis</keyword>
<keyword id="KW-0548">Nucleotidyltransferase</keyword>
<keyword id="KW-1185">Reference proteome</keyword>
<keyword id="KW-0808">Transferase</keyword>
<protein>
    <recommendedName>
        <fullName evidence="1">2-C-methyl-D-erythritol 4-phosphate cytidylyltransferase</fullName>
        <ecNumber evidence="1">2.7.7.60</ecNumber>
    </recommendedName>
    <alternativeName>
        <fullName evidence="1">4-diphosphocytidyl-2C-methyl-D-erythritol synthase</fullName>
    </alternativeName>
    <alternativeName>
        <fullName evidence="1">MEP cytidylyltransferase</fullName>
        <shortName evidence="1">MCT</shortName>
    </alternativeName>
</protein>
<feature type="chain" id="PRO_0000075553" description="2-C-methyl-D-erythritol 4-phosphate cytidylyltransferase">
    <location>
        <begin position="1"/>
        <end position="291"/>
    </location>
</feature>
<feature type="region of interest" description="Disordered" evidence="2">
    <location>
        <begin position="1"/>
        <end position="23"/>
    </location>
</feature>
<feature type="site" description="Transition state stabilizer" evidence="1">
    <location>
        <position position="43"/>
    </location>
</feature>
<feature type="site" description="Transition state stabilizer" evidence="1">
    <location>
        <position position="50"/>
    </location>
</feature>
<feature type="site" description="Positions MEP for the nucleophilic attack" evidence="1">
    <location>
        <position position="189"/>
    </location>
</feature>
<feature type="site" description="Positions MEP for the nucleophilic attack" evidence="1">
    <location>
        <position position="248"/>
    </location>
</feature>
<gene>
    <name evidence="1" type="primary">ispD</name>
    <name type="ordered locus">BL0324</name>
</gene>
<dbReference type="EC" id="2.7.7.60" evidence="1"/>
<dbReference type="EMBL" id="AE014295">
    <property type="protein sequence ID" value="AAN24164.1"/>
    <property type="molecule type" value="Genomic_DNA"/>
</dbReference>
<dbReference type="RefSeq" id="NP_695528.1">
    <property type="nucleotide sequence ID" value="NC_004307.2"/>
</dbReference>
<dbReference type="RefSeq" id="WP_011068426.1">
    <property type="nucleotide sequence ID" value="NC_004307.2"/>
</dbReference>
<dbReference type="SMR" id="Q8G7E2"/>
<dbReference type="STRING" id="206672.BL0324"/>
<dbReference type="EnsemblBacteria" id="AAN24164">
    <property type="protein sequence ID" value="AAN24164"/>
    <property type="gene ID" value="BL0324"/>
</dbReference>
<dbReference type="KEGG" id="blo:BL0324"/>
<dbReference type="PATRIC" id="fig|206672.9.peg.1063"/>
<dbReference type="HOGENOM" id="CLU_061281_2_1_11"/>
<dbReference type="OrthoDB" id="9802561at2"/>
<dbReference type="PhylomeDB" id="Q8G7E2"/>
<dbReference type="UniPathway" id="UPA00056">
    <property type="reaction ID" value="UER00093"/>
</dbReference>
<dbReference type="Proteomes" id="UP000000439">
    <property type="component" value="Chromosome"/>
</dbReference>
<dbReference type="GO" id="GO:0050518">
    <property type="term" value="F:2-C-methyl-D-erythritol 4-phosphate cytidylyltransferase activity"/>
    <property type="evidence" value="ECO:0007669"/>
    <property type="project" value="UniProtKB-UniRule"/>
</dbReference>
<dbReference type="GO" id="GO:0019288">
    <property type="term" value="P:isopentenyl diphosphate biosynthetic process, methylerythritol 4-phosphate pathway"/>
    <property type="evidence" value="ECO:0007669"/>
    <property type="project" value="UniProtKB-UniRule"/>
</dbReference>
<dbReference type="CDD" id="cd02516">
    <property type="entry name" value="CDP-ME_synthetase"/>
    <property type="match status" value="1"/>
</dbReference>
<dbReference type="Gene3D" id="3.90.550.10">
    <property type="entry name" value="Spore Coat Polysaccharide Biosynthesis Protein SpsA, Chain A"/>
    <property type="match status" value="1"/>
</dbReference>
<dbReference type="HAMAP" id="MF_00108">
    <property type="entry name" value="IspD"/>
    <property type="match status" value="1"/>
</dbReference>
<dbReference type="InterPro" id="IPR001228">
    <property type="entry name" value="IspD"/>
</dbReference>
<dbReference type="InterPro" id="IPR034683">
    <property type="entry name" value="IspD/TarI"/>
</dbReference>
<dbReference type="InterPro" id="IPR050088">
    <property type="entry name" value="IspD/TarI_cytidylyltransf_bact"/>
</dbReference>
<dbReference type="InterPro" id="IPR018294">
    <property type="entry name" value="ISPD_synthase_CS"/>
</dbReference>
<dbReference type="InterPro" id="IPR029044">
    <property type="entry name" value="Nucleotide-diphossugar_trans"/>
</dbReference>
<dbReference type="PANTHER" id="PTHR32125">
    <property type="entry name" value="2-C-METHYL-D-ERYTHRITOL 4-PHOSPHATE CYTIDYLYLTRANSFERASE, CHLOROPLASTIC"/>
    <property type="match status" value="1"/>
</dbReference>
<dbReference type="PANTHER" id="PTHR32125:SF4">
    <property type="entry name" value="2-C-METHYL-D-ERYTHRITOL 4-PHOSPHATE CYTIDYLYLTRANSFERASE, CHLOROPLASTIC"/>
    <property type="match status" value="1"/>
</dbReference>
<dbReference type="Pfam" id="PF01128">
    <property type="entry name" value="IspD"/>
    <property type="match status" value="1"/>
</dbReference>
<dbReference type="SUPFAM" id="SSF53448">
    <property type="entry name" value="Nucleotide-diphospho-sugar transferases"/>
    <property type="match status" value="1"/>
</dbReference>
<dbReference type="PROSITE" id="PS01295">
    <property type="entry name" value="ISPD"/>
    <property type="match status" value="1"/>
</dbReference>
<organism>
    <name type="scientific">Bifidobacterium longum (strain NCC 2705)</name>
    <dbReference type="NCBI Taxonomy" id="206672"/>
    <lineage>
        <taxon>Bacteria</taxon>
        <taxon>Bacillati</taxon>
        <taxon>Actinomycetota</taxon>
        <taxon>Actinomycetes</taxon>
        <taxon>Bifidobacteriales</taxon>
        <taxon>Bifidobacteriaceae</taxon>
        <taxon>Bifidobacterium</taxon>
    </lineage>
</organism>
<name>ISPD_BIFLO</name>
<comment type="function">
    <text evidence="1">Catalyzes the formation of 4-diphosphocytidyl-2-C-methyl-D-erythritol from CTP and 2-C-methyl-D-erythritol 4-phosphate (MEP).</text>
</comment>
<comment type="catalytic activity">
    <reaction evidence="1">
        <text>2-C-methyl-D-erythritol 4-phosphate + CTP + H(+) = 4-CDP-2-C-methyl-D-erythritol + diphosphate</text>
        <dbReference type="Rhea" id="RHEA:13429"/>
        <dbReference type="ChEBI" id="CHEBI:15378"/>
        <dbReference type="ChEBI" id="CHEBI:33019"/>
        <dbReference type="ChEBI" id="CHEBI:37563"/>
        <dbReference type="ChEBI" id="CHEBI:57823"/>
        <dbReference type="ChEBI" id="CHEBI:58262"/>
        <dbReference type="EC" id="2.7.7.60"/>
    </reaction>
</comment>
<comment type="pathway">
    <text evidence="1">Isoprenoid biosynthesis; isopentenyl diphosphate biosynthesis via DXP pathway; isopentenyl diphosphate from 1-deoxy-D-xylulose 5-phosphate: step 2/6.</text>
</comment>
<comment type="similarity">
    <text evidence="1">Belongs to the IspD/TarI cytidylyltransferase family. IspD subfamily.</text>
</comment>
<evidence type="ECO:0000255" key="1">
    <source>
        <dbReference type="HAMAP-Rule" id="MF_00108"/>
    </source>
</evidence>
<evidence type="ECO:0000256" key="2">
    <source>
        <dbReference type="SAM" id="MobiDB-lite"/>
    </source>
</evidence>
<reference key="1">
    <citation type="journal article" date="2002" name="Proc. Natl. Acad. Sci. U.S.A.">
        <title>The genome sequence of Bifidobacterium longum reflects its adaptation to the human gastrointestinal tract.</title>
        <authorList>
            <person name="Schell M.A."/>
            <person name="Karmirantzou M."/>
            <person name="Snel B."/>
            <person name="Vilanova D."/>
            <person name="Berger B."/>
            <person name="Pessi G."/>
            <person name="Zwahlen M.-C."/>
            <person name="Desiere F."/>
            <person name="Bork P."/>
            <person name="Delley M."/>
            <person name="Pridmore R.D."/>
            <person name="Arigoni F."/>
        </authorList>
    </citation>
    <scope>NUCLEOTIDE SEQUENCE [LARGE SCALE GENOMIC DNA]</scope>
    <source>
        <strain>NCC 2705</strain>
    </source>
</reference>
<sequence length="291" mass="31364">MTERDFDTPVETPTVQPAPAQGAKPAQTVPVVAVVLAAGFGTRFDPDNPKQLVSVGGKPIVCWSIDAFEHCDRVSDIVVVVNPKVRGEVETLVGEMGYTKVRVIIDGGDERVDSTATALDMLATAGIPDDAKILIHDAVRPFVEQSAIDGSIDALDQFTAATVAYASTDTVLLTEDLGDLKVVKSVPDRPNTFRAQTPQSFRFATIRHAYDLAAADPDFHPTDDTRVVVDYLPDEPVAIVSGAETNLKITTLEDIPTAERIAEEILGRDPKEEARARMHALLAQAAGQMHR</sequence>
<proteinExistence type="inferred from homology"/>
<accession>Q8G7E2</accession>